<organism>
    <name type="scientific">Bothrops jararaca</name>
    <name type="common">Jararaca</name>
    <name type="synonym">Bothrops jajaraca</name>
    <dbReference type="NCBI Taxonomy" id="8724"/>
    <lineage>
        <taxon>Eukaryota</taxon>
        <taxon>Metazoa</taxon>
        <taxon>Chordata</taxon>
        <taxon>Craniata</taxon>
        <taxon>Vertebrata</taxon>
        <taxon>Euteleostomi</taxon>
        <taxon>Lepidosauria</taxon>
        <taxon>Squamata</taxon>
        <taxon>Bifurcata</taxon>
        <taxon>Unidentata</taxon>
        <taxon>Episquamata</taxon>
        <taxon>Toxicofera</taxon>
        <taxon>Serpentes</taxon>
        <taxon>Colubroidea</taxon>
        <taxon>Viperidae</taxon>
        <taxon>Crotalinae</taxon>
        <taxon>Bothrops</taxon>
    </lineage>
</organism>
<keyword id="KW-0106">Calcium</keyword>
<keyword id="KW-1217">Cell adhesion impairing toxin</keyword>
<keyword id="KW-1015">Disulfide bond</keyword>
<keyword id="KW-0325">Glycoprotein</keyword>
<keyword id="KW-1199">Hemostasis impairing toxin</keyword>
<keyword id="KW-0378">Hydrolase</keyword>
<keyword id="KW-0479">Metal-binding</keyword>
<keyword id="KW-0482">Metalloprotease</keyword>
<keyword id="KW-1201">Platelet aggregation inhibiting toxin</keyword>
<keyword id="KW-0645">Protease</keyword>
<keyword id="KW-0964">Secreted</keyword>
<keyword id="KW-0800">Toxin</keyword>
<keyword id="KW-0862">Zinc</keyword>
<proteinExistence type="evidence at protein level"/>
<reference key="1">
    <citation type="journal article" date="2006" name="Toxicon">
        <title>Molecular diversity of disintegrin-like domains within metalloproteinase precursors of Bothrops jararaca.</title>
        <authorList>
            <person name="Cidade D.A.P."/>
            <person name="Wermelinger L.S."/>
            <person name="Lobo-Hajdu G."/>
            <person name="Davila A.M.R."/>
            <person name="Bon C."/>
            <person name="Zingali R.B."/>
            <person name="Albano R.M."/>
        </authorList>
    </citation>
    <scope>NUCLEOTIDE SEQUENCE [MRNA]</scope>
    <source>
        <tissue>Venom gland</tissue>
    </source>
</reference>
<reference key="2">
    <citation type="journal article" date="2010" name="J. Proteome Res.">
        <title>Analysis of the ontogenetic variation in the venom proteome/peptidome of Bothrops jararaca reveals different strategies to deal with prey.</title>
        <authorList>
            <person name="Zelanis A."/>
            <person name="Tashima A.K."/>
            <person name="Rocha M.M."/>
            <person name="Furtado M.F."/>
            <person name="Camargo A.C."/>
            <person name="Ho P.L."/>
            <person name="Serrano S.M."/>
        </authorList>
    </citation>
    <scope>IDENTIFICATION BY MASS SPECTROMETRY</scope>
    <scope>DEVELOPMENTAL STAGE</scope>
    <scope>GLYCOSYLATION</scope>
    <source>
        <tissue>Venom</tissue>
    </source>
</reference>
<accession>Q0NZX8</accession>
<comment type="function">
    <text evidence="1">The hemorrhagic metalloproteinase-disintegrin-like bothrojarin-1 is a potent inhibitor of collagen-induced platelet aggregation by blockage of alpha-2/beta-1 (ITGA2/ITGB1) integrin. It does not present any fibrinogen-clotting activity (By similarity).</text>
</comment>
<comment type="cofactor">
    <cofactor evidence="1">
        <name>Zn(2+)</name>
        <dbReference type="ChEBI" id="CHEBI:29105"/>
    </cofactor>
    <text evidence="1">Binds 1 zinc ion per subunit.</text>
</comment>
<comment type="subunit">
    <text evidence="1">Monomer.</text>
</comment>
<comment type="subcellular location">
    <subcellularLocation>
        <location evidence="1">Secreted</location>
    </subcellularLocation>
</comment>
<comment type="tissue specificity">
    <text>Expressed by the venom gland.</text>
</comment>
<comment type="developmental stage">
    <text evidence="3">This protein seems to be found in newborn B.jararaca venom but not in adult snake venom.</text>
</comment>
<comment type="PTM">
    <text evidence="3">Glycosylated.</text>
</comment>
<comment type="similarity">
    <text evidence="4">Belongs to the venom metalloproteinase (M12B) family. P-III subfamily. P-IIIa sub-subfamily.</text>
</comment>
<name>VM3B3_BOTJA</name>
<sequence>SPPVCGTELLEVGEECDCGSPTNCRNPCCDATTCKLHSWVECESGECCEQCRFIKAGNVCRPQRSECDIAESCTGQSADCPTDDIQRNGQPCLNNFGYCYNGMCPIMYHQCIALFGASATVSPDSCFDSNLDGQGLFYCRRERARIFPCAKEDVKCGRLFCNYFQSSCLYQYSGDIDFGMVDDGTKCAEGKVCNSN</sequence>
<evidence type="ECO:0000250" key="1"/>
<evidence type="ECO:0000255" key="2">
    <source>
        <dbReference type="PROSITE-ProRule" id="PRU00068"/>
    </source>
</evidence>
<evidence type="ECO:0000269" key="3">
    <source>
    </source>
</evidence>
<evidence type="ECO:0000305" key="4"/>
<feature type="chain" id="PRO_0000329985" description="Zinc metalloproteinase-disintegrin-like bothrojarin-3">
    <location>
        <begin position="1" status="less than"/>
        <end position="196" status="greater than"/>
    </location>
</feature>
<feature type="domain" description="Disintegrin" evidence="2">
    <location>
        <begin position="2"/>
        <end position="88"/>
    </location>
</feature>
<feature type="short sequence motif" description="D/ECD-tripeptide">
    <location>
        <begin position="66"/>
        <end position="68"/>
    </location>
</feature>
<feature type="binding site" evidence="1">
    <location>
        <position position="4"/>
    </location>
    <ligand>
        <name>Ca(2+)</name>
        <dbReference type="ChEBI" id="CHEBI:29108"/>
    </ligand>
</feature>
<feature type="binding site" evidence="1">
    <location>
        <position position="9"/>
    </location>
    <ligand>
        <name>Ca(2+)</name>
        <dbReference type="ChEBI" id="CHEBI:29108"/>
    </ligand>
</feature>
<feature type="binding site" evidence="1">
    <location>
        <position position="11"/>
    </location>
    <ligand>
        <name>Ca(2+)</name>
        <dbReference type="ChEBI" id="CHEBI:29108"/>
    </ligand>
</feature>
<feature type="binding site" evidence="1">
    <location>
        <position position="14"/>
    </location>
    <ligand>
        <name>Ca(2+)</name>
        <dbReference type="ChEBI" id="CHEBI:29108"/>
    </ligand>
</feature>
<feature type="binding site" evidence="1">
    <location>
        <position position="17"/>
    </location>
    <ligand>
        <name>Ca(2+)</name>
        <dbReference type="ChEBI" id="CHEBI:29108"/>
    </ligand>
</feature>
<feature type="disulfide bond" evidence="2">
    <location>
        <begin position="5"/>
        <end position="34"/>
    </location>
</feature>
<feature type="disulfide bond" evidence="2">
    <location>
        <begin position="16"/>
        <end position="29"/>
    </location>
</feature>
<feature type="disulfide bond" evidence="2">
    <location>
        <begin position="18"/>
        <end position="24"/>
    </location>
</feature>
<feature type="disulfide bond" evidence="2">
    <location>
        <begin position="28"/>
        <end position="51"/>
    </location>
</feature>
<feature type="disulfide bond" evidence="2">
    <location>
        <begin position="42"/>
        <end position="48"/>
    </location>
</feature>
<feature type="disulfide bond" evidence="2">
    <location>
        <begin position="47"/>
        <end position="73"/>
    </location>
</feature>
<feature type="disulfide bond" evidence="2">
    <location>
        <begin position="60"/>
        <end position="80"/>
    </location>
</feature>
<feature type="disulfide bond" evidence="2">
    <location>
        <begin position="67"/>
        <end position="99"/>
    </location>
</feature>
<feature type="disulfide bond" evidence="2">
    <location>
        <begin position="92"/>
        <end position="104"/>
    </location>
</feature>
<feature type="disulfide bond" evidence="2">
    <location>
        <begin position="111"/>
        <end position="161"/>
    </location>
</feature>
<feature type="disulfide bond" evidence="2">
    <location>
        <begin position="126"/>
        <end position="168"/>
    </location>
</feature>
<feature type="disulfide bond" evidence="2">
    <location>
        <begin position="139"/>
        <end position="149"/>
    </location>
</feature>
<feature type="disulfide bond" evidence="2">
    <location>
        <begin position="156"/>
        <end position="193"/>
    </location>
</feature>
<feature type="non-terminal residue">
    <location>
        <position position="1"/>
    </location>
</feature>
<feature type="non-terminal residue">
    <location>
        <position position="196"/>
    </location>
</feature>
<dbReference type="EC" id="3.4.24.-"/>
<dbReference type="EMBL" id="DQ375438">
    <property type="protein sequence ID" value="ABD34831.1"/>
    <property type="molecule type" value="mRNA"/>
</dbReference>
<dbReference type="SMR" id="Q0NZX8"/>
<dbReference type="GO" id="GO:0005576">
    <property type="term" value="C:extracellular region"/>
    <property type="evidence" value="ECO:0007669"/>
    <property type="project" value="UniProtKB-SubCell"/>
</dbReference>
<dbReference type="GO" id="GO:0005886">
    <property type="term" value="C:plasma membrane"/>
    <property type="evidence" value="ECO:0007669"/>
    <property type="project" value="TreeGrafter"/>
</dbReference>
<dbReference type="GO" id="GO:0046872">
    <property type="term" value="F:metal ion binding"/>
    <property type="evidence" value="ECO:0007669"/>
    <property type="project" value="UniProtKB-KW"/>
</dbReference>
<dbReference type="GO" id="GO:0008237">
    <property type="term" value="F:metallopeptidase activity"/>
    <property type="evidence" value="ECO:0007669"/>
    <property type="project" value="UniProtKB-KW"/>
</dbReference>
<dbReference type="GO" id="GO:0090729">
    <property type="term" value="F:toxin activity"/>
    <property type="evidence" value="ECO:0007669"/>
    <property type="project" value="UniProtKB-KW"/>
</dbReference>
<dbReference type="GO" id="GO:0006508">
    <property type="term" value="P:proteolysis"/>
    <property type="evidence" value="ECO:0007669"/>
    <property type="project" value="UniProtKB-KW"/>
</dbReference>
<dbReference type="FunFam" id="4.10.70.10:FF:000001">
    <property type="entry name" value="Disintegrin and metalloproteinase domain-containing protein 22"/>
    <property type="match status" value="1"/>
</dbReference>
<dbReference type="Gene3D" id="4.10.70.10">
    <property type="entry name" value="Disintegrin domain"/>
    <property type="match status" value="1"/>
</dbReference>
<dbReference type="InterPro" id="IPR006586">
    <property type="entry name" value="ADAM_Cys-rich"/>
</dbReference>
<dbReference type="InterPro" id="IPR018358">
    <property type="entry name" value="Disintegrin_CS"/>
</dbReference>
<dbReference type="InterPro" id="IPR001762">
    <property type="entry name" value="Disintegrin_dom"/>
</dbReference>
<dbReference type="InterPro" id="IPR036436">
    <property type="entry name" value="Disintegrin_dom_sf"/>
</dbReference>
<dbReference type="PANTHER" id="PTHR11905">
    <property type="entry name" value="ADAM A DISINTEGRIN AND METALLOPROTEASE DOMAIN"/>
    <property type="match status" value="1"/>
</dbReference>
<dbReference type="PANTHER" id="PTHR11905:SF32">
    <property type="entry name" value="DISINTEGRIN AND METALLOPROTEINASE DOMAIN-CONTAINING PROTEIN 28"/>
    <property type="match status" value="1"/>
</dbReference>
<dbReference type="Pfam" id="PF08516">
    <property type="entry name" value="ADAM_CR"/>
    <property type="match status" value="1"/>
</dbReference>
<dbReference type="Pfam" id="PF00200">
    <property type="entry name" value="Disintegrin"/>
    <property type="match status" value="1"/>
</dbReference>
<dbReference type="PRINTS" id="PR00289">
    <property type="entry name" value="DISINTEGRIN"/>
</dbReference>
<dbReference type="SMART" id="SM00608">
    <property type="entry name" value="ACR"/>
    <property type="match status" value="1"/>
</dbReference>
<dbReference type="SMART" id="SM00050">
    <property type="entry name" value="DISIN"/>
    <property type="match status" value="1"/>
</dbReference>
<dbReference type="SUPFAM" id="SSF57552">
    <property type="entry name" value="Blood coagulation inhibitor (disintegrin)"/>
    <property type="match status" value="1"/>
</dbReference>
<dbReference type="PROSITE" id="PS00427">
    <property type="entry name" value="DISINTEGRIN_1"/>
    <property type="match status" value="1"/>
</dbReference>
<dbReference type="PROSITE" id="PS50214">
    <property type="entry name" value="DISINTEGRIN_2"/>
    <property type="match status" value="1"/>
</dbReference>
<protein>
    <recommendedName>
        <fullName>Zinc metalloproteinase-disintegrin-like bothrojarin-3</fullName>
        <ecNumber>3.4.24.-</ecNumber>
    </recommendedName>
    <alternativeName>
        <fullName>Snake venom metalloproteinase</fullName>
        <shortName>SVMP</shortName>
    </alternativeName>
</protein>